<protein>
    <recommendedName>
        <fullName>Bacterial non-heme ferritin</fullName>
        <ecNumber>1.16.3.2</ecNumber>
    </recommendedName>
</protein>
<accession>Q6G840</accession>
<reference key="1">
    <citation type="journal article" date="2004" name="Proc. Natl. Acad. Sci. U.S.A.">
        <title>Complete genomes of two clinical Staphylococcus aureus strains: evidence for the rapid evolution of virulence and drug resistance.</title>
        <authorList>
            <person name="Holden M.T.G."/>
            <person name="Feil E.J."/>
            <person name="Lindsay J.A."/>
            <person name="Peacock S.J."/>
            <person name="Day N.P.J."/>
            <person name="Enright M.C."/>
            <person name="Foster T.J."/>
            <person name="Moore C.E."/>
            <person name="Hurst L."/>
            <person name="Atkin R."/>
            <person name="Barron A."/>
            <person name="Bason N."/>
            <person name="Bentley S.D."/>
            <person name="Chillingworth C."/>
            <person name="Chillingworth T."/>
            <person name="Churcher C."/>
            <person name="Clark L."/>
            <person name="Corton C."/>
            <person name="Cronin A."/>
            <person name="Doggett J."/>
            <person name="Dowd L."/>
            <person name="Feltwell T."/>
            <person name="Hance Z."/>
            <person name="Harris B."/>
            <person name="Hauser H."/>
            <person name="Holroyd S."/>
            <person name="Jagels K."/>
            <person name="James K.D."/>
            <person name="Lennard N."/>
            <person name="Line A."/>
            <person name="Mayes R."/>
            <person name="Moule S."/>
            <person name="Mungall K."/>
            <person name="Ormond D."/>
            <person name="Quail M.A."/>
            <person name="Rabbinowitsch E."/>
            <person name="Rutherford K.M."/>
            <person name="Sanders M."/>
            <person name="Sharp S."/>
            <person name="Simmonds M."/>
            <person name="Stevens K."/>
            <person name="Whitehead S."/>
            <person name="Barrell B.G."/>
            <person name="Spratt B.G."/>
            <person name="Parkhill J."/>
        </authorList>
    </citation>
    <scope>NUCLEOTIDE SEQUENCE [LARGE SCALE GENOMIC DNA]</scope>
    <source>
        <strain>MSSA476</strain>
    </source>
</reference>
<keyword id="KW-0963">Cytoplasm</keyword>
<keyword id="KW-0408">Iron</keyword>
<keyword id="KW-0409">Iron storage</keyword>
<keyword id="KW-0479">Metal-binding</keyword>
<keyword id="KW-0560">Oxidoreductase</keyword>
<sequence length="166" mass="19589">MLSKNLLEALNDQMNHEYFAAHAYMAMAAYCDKESYEGFANFFIQQAKEERFHGQKIYNYINDRGAHAEFRAVSAPKIDFSSILETFKDSLSQEQEVTRRFYNLSEIARQDKDYATISFLNWFLDEQVEEESMFETHINYLTRIGDDSNALYLYEKELGARTFDEE</sequence>
<comment type="function">
    <text evidence="1">Iron-storage protein.</text>
</comment>
<comment type="catalytic activity">
    <reaction>
        <text>4 Fe(2+) + O2 + 6 H2O = 4 iron(III) oxide-hydroxide + 12 H(+)</text>
        <dbReference type="Rhea" id="RHEA:11972"/>
        <dbReference type="ChEBI" id="CHEBI:15377"/>
        <dbReference type="ChEBI" id="CHEBI:15378"/>
        <dbReference type="ChEBI" id="CHEBI:15379"/>
        <dbReference type="ChEBI" id="CHEBI:29033"/>
        <dbReference type="ChEBI" id="CHEBI:78619"/>
        <dbReference type="EC" id="1.16.3.2"/>
    </reaction>
</comment>
<comment type="subcellular location">
    <subcellularLocation>
        <location evidence="1">Cytoplasm</location>
    </subcellularLocation>
</comment>
<comment type="similarity">
    <text evidence="3">Belongs to the ferritin family. Prokaryotic subfamily.</text>
</comment>
<feature type="initiator methionine" description="Removed" evidence="1">
    <location>
        <position position="1"/>
    </location>
</feature>
<feature type="chain" id="PRO_0000298966" description="Bacterial non-heme ferritin">
    <location>
        <begin position="2"/>
        <end position="166"/>
    </location>
</feature>
<feature type="domain" description="Ferritin-like diiron" evidence="2">
    <location>
        <begin position="2"/>
        <end position="145"/>
    </location>
</feature>
<feature type="binding site" evidence="2">
    <location>
        <position position="17"/>
    </location>
    <ligand>
        <name>Fe cation</name>
        <dbReference type="ChEBI" id="CHEBI:24875"/>
        <label>1</label>
    </ligand>
</feature>
<feature type="binding site" evidence="2">
    <location>
        <position position="50"/>
    </location>
    <ligand>
        <name>Fe cation</name>
        <dbReference type="ChEBI" id="CHEBI:24875"/>
        <label>1</label>
    </ligand>
</feature>
<feature type="binding site" evidence="2">
    <location>
        <position position="50"/>
    </location>
    <ligand>
        <name>Fe cation</name>
        <dbReference type="ChEBI" id="CHEBI:24875"/>
        <label>2</label>
    </ligand>
</feature>
<feature type="binding site" evidence="2">
    <location>
        <position position="53"/>
    </location>
    <ligand>
        <name>Fe cation</name>
        <dbReference type="ChEBI" id="CHEBI:24875"/>
        <label>1</label>
    </ligand>
</feature>
<feature type="binding site" evidence="2">
    <location>
        <position position="94"/>
    </location>
    <ligand>
        <name>Fe cation</name>
        <dbReference type="ChEBI" id="CHEBI:24875"/>
        <label>2</label>
    </ligand>
</feature>
<feature type="binding site" evidence="2">
    <location>
        <position position="127"/>
    </location>
    <ligand>
        <name>Fe cation</name>
        <dbReference type="ChEBI" id="CHEBI:24875"/>
        <label>2</label>
    </ligand>
</feature>
<name>FTN_STAAS</name>
<evidence type="ECO:0000250" key="1"/>
<evidence type="ECO:0000255" key="2">
    <source>
        <dbReference type="PROSITE-ProRule" id="PRU00085"/>
    </source>
</evidence>
<evidence type="ECO:0000305" key="3"/>
<proteinExistence type="inferred from homology"/>
<gene>
    <name type="primary">ftnA</name>
    <name type="ordered locus">SAS1815</name>
</gene>
<dbReference type="EC" id="1.16.3.2"/>
<dbReference type="EMBL" id="BX571857">
    <property type="protein sequence ID" value="CAG43621.1"/>
    <property type="molecule type" value="Genomic_DNA"/>
</dbReference>
<dbReference type="RefSeq" id="WP_000949467.1">
    <property type="nucleotide sequence ID" value="NC_002953.3"/>
</dbReference>
<dbReference type="SMR" id="Q6G840"/>
<dbReference type="KEGG" id="sas:SAS1815"/>
<dbReference type="HOGENOM" id="CLU_065681_1_2_9"/>
<dbReference type="GO" id="GO:0005829">
    <property type="term" value="C:cytosol"/>
    <property type="evidence" value="ECO:0007669"/>
    <property type="project" value="TreeGrafter"/>
</dbReference>
<dbReference type="GO" id="GO:0008199">
    <property type="term" value="F:ferric iron binding"/>
    <property type="evidence" value="ECO:0007669"/>
    <property type="project" value="InterPro"/>
</dbReference>
<dbReference type="GO" id="GO:0008198">
    <property type="term" value="F:ferrous iron binding"/>
    <property type="evidence" value="ECO:0007669"/>
    <property type="project" value="TreeGrafter"/>
</dbReference>
<dbReference type="GO" id="GO:0004322">
    <property type="term" value="F:ferroxidase activity"/>
    <property type="evidence" value="ECO:0007669"/>
    <property type="project" value="TreeGrafter"/>
</dbReference>
<dbReference type="GO" id="GO:0006879">
    <property type="term" value="P:intracellular iron ion homeostasis"/>
    <property type="evidence" value="ECO:0007669"/>
    <property type="project" value="UniProtKB-KW"/>
</dbReference>
<dbReference type="GO" id="GO:0006826">
    <property type="term" value="P:iron ion transport"/>
    <property type="evidence" value="ECO:0007669"/>
    <property type="project" value="InterPro"/>
</dbReference>
<dbReference type="CDD" id="cd01055">
    <property type="entry name" value="Nonheme_Ferritin"/>
    <property type="match status" value="1"/>
</dbReference>
<dbReference type="FunFam" id="1.20.1260.10:FF:000001">
    <property type="entry name" value="Non-heme ferritin"/>
    <property type="match status" value="1"/>
</dbReference>
<dbReference type="Gene3D" id="1.20.1260.10">
    <property type="match status" value="1"/>
</dbReference>
<dbReference type="InterPro" id="IPR001519">
    <property type="entry name" value="Ferritin"/>
</dbReference>
<dbReference type="InterPro" id="IPR012347">
    <property type="entry name" value="Ferritin-like"/>
</dbReference>
<dbReference type="InterPro" id="IPR009040">
    <property type="entry name" value="Ferritin-like_diiron"/>
</dbReference>
<dbReference type="InterPro" id="IPR009078">
    <property type="entry name" value="Ferritin-like_SF"/>
</dbReference>
<dbReference type="InterPro" id="IPR008331">
    <property type="entry name" value="Ferritin_DPS_dom"/>
</dbReference>
<dbReference type="InterPro" id="IPR041719">
    <property type="entry name" value="Ferritin_prok"/>
</dbReference>
<dbReference type="PANTHER" id="PTHR11431:SF127">
    <property type="entry name" value="BACTERIAL NON-HEME FERRITIN"/>
    <property type="match status" value="1"/>
</dbReference>
<dbReference type="PANTHER" id="PTHR11431">
    <property type="entry name" value="FERRITIN"/>
    <property type="match status" value="1"/>
</dbReference>
<dbReference type="Pfam" id="PF00210">
    <property type="entry name" value="Ferritin"/>
    <property type="match status" value="1"/>
</dbReference>
<dbReference type="SUPFAM" id="SSF47240">
    <property type="entry name" value="Ferritin-like"/>
    <property type="match status" value="1"/>
</dbReference>
<dbReference type="PROSITE" id="PS50905">
    <property type="entry name" value="FERRITIN_LIKE"/>
    <property type="match status" value="1"/>
</dbReference>
<organism>
    <name type="scientific">Staphylococcus aureus (strain MSSA476)</name>
    <dbReference type="NCBI Taxonomy" id="282459"/>
    <lineage>
        <taxon>Bacteria</taxon>
        <taxon>Bacillati</taxon>
        <taxon>Bacillota</taxon>
        <taxon>Bacilli</taxon>
        <taxon>Bacillales</taxon>
        <taxon>Staphylococcaceae</taxon>
        <taxon>Staphylococcus</taxon>
    </lineage>
</organism>